<gene>
    <name type="primary">ZNF277</name>
    <name type="synonym">NRIF4</name>
    <name type="synonym">ZNF277P</name>
</gene>
<accession>Q9NRM2</accession>
<accession>Q75MZ2</accession>
<accession>Q75MZ3</accession>
<accession>Q8WY14</accession>
<organism>
    <name type="scientific">Homo sapiens</name>
    <name type="common">Human</name>
    <dbReference type="NCBI Taxonomy" id="9606"/>
    <lineage>
        <taxon>Eukaryota</taxon>
        <taxon>Metazoa</taxon>
        <taxon>Chordata</taxon>
        <taxon>Craniata</taxon>
        <taxon>Vertebrata</taxon>
        <taxon>Euteleostomi</taxon>
        <taxon>Mammalia</taxon>
        <taxon>Eutheria</taxon>
        <taxon>Euarchontoglires</taxon>
        <taxon>Primates</taxon>
        <taxon>Haplorrhini</taxon>
        <taxon>Catarrhini</taxon>
        <taxon>Hominidae</taxon>
        <taxon>Homo</taxon>
    </lineage>
</organism>
<keyword id="KW-0007">Acetylation</keyword>
<keyword id="KW-0238">DNA-binding</keyword>
<keyword id="KW-0479">Metal-binding</keyword>
<keyword id="KW-0539">Nucleus</keyword>
<keyword id="KW-1267">Proteomics identification</keyword>
<keyword id="KW-1185">Reference proteome</keyword>
<keyword id="KW-0677">Repeat</keyword>
<keyword id="KW-0804">Transcription</keyword>
<keyword id="KW-0805">Transcription regulation</keyword>
<keyword id="KW-0862">Zinc</keyword>
<keyword id="KW-0863">Zinc-finger</keyword>
<name>ZN277_HUMAN</name>
<reference key="1">
    <citation type="journal article" date="2000" name="Genomics">
        <title>Chromosomal mapping and genomic organization of an evolutionarily conserved zinc finger gene ZNF277.</title>
        <authorList>
            <person name="Liang H."/>
            <person name="Guo W."/>
            <person name="Nagarajan L."/>
        </authorList>
    </citation>
    <scope>NUCLEOTIDE SEQUENCE [MRNA]</scope>
</reference>
<reference key="2">
    <citation type="submission" date="2000-09" db="EMBL/GenBank/DDBJ databases">
        <title>The putative nuclear receptor coregulator NRIF4.</title>
        <authorList>
            <person name="Li D."/>
            <person name="Desai-Yajnik V."/>
            <person name="Samuels H.H."/>
        </authorList>
    </citation>
    <scope>NUCLEOTIDE SEQUENCE [MRNA]</scope>
</reference>
<reference key="3">
    <citation type="journal article" date="2003" name="Nature">
        <title>The DNA sequence of human chromosome 7.</title>
        <authorList>
            <person name="Hillier L.W."/>
            <person name="Fulton R.S."/>
            <person name="Fulton L.A."/>
            <person name="Graves T.A."/>
            <person name="Pepin K.H."/>
            <person name="Wagner-McPherson C."/>
            <person name="Layman D."/>
            <person name="Maas J."/>
            <person name="Jaeger S."/>
            <person name="Walker R."/>
            <person name="Wylie K."/>
            <person name="Sekhon M."/>
            <person name="Becker M.C."/>
            <person name="O'Laughlin M.D."/>
            <person name="Schaller M.E."/>
            <person name="Fewell G.A."/>
            <person name="Delehaunty K.D."/>
            <person name="Miner T.L."/>
            <person name="Nash W.E."/>
            <person name="Cordes M."/>
            <person name="Du H."/>
            <person name="Sun H."/>
            <person name="Edwards J."/>
            <person name="Bradshaw-Cordum H."/>
            <person name="Ali J."/>
            <person name="Andrews S."/>
            <person name="Isak A."/>
            <person name="Vanbrunt A."/>
            <person name="Nguyen C."/>
            <person name="Du F."/>
            <person name="Lamar B."/>
            <person name="Courtney L."/>
            <person name="Kalicki J."/>
            <person name="Ozersky P."/>
            <person name="Bielicki L."/>
            <person name="Scott K."/>
            <person name="Holmes A."/>
            <person name="Harkins R."/>
            <person name="Harris A."/>
            <person name="Strong C.M."/>
            <person name="Hou S."/>
            <person name="Tomlinson C."/>
            <person name="Dauphin-Kohlberg S."/>
            <person name="Kozlowicz-Reilly A."/>
            <person name="Leonard S."/>
            <person name="Rohlfing T."/>
            <person name="Rock S.M."/>
            <person name="Tin-Wollam A.-M."/>
            <person name="Abbott A."/>
            <person name="Minx P."/>
            <person name="Maupin R."/>
            <person name="Strowmatt C."/>
            <person name="Latreille P."/>
            <person name="Miller N."/>
            <person name="Johnson D."/>
            <person name="Murray J."/>
            <person name="Woessner J.P."/>
            <person name="Wendl M.C."/>
            <person name="Yang S.-P."/>
            <person name="Schultz B.R."/>
            <person name="Wallis J.W."/>
            <person name="Spieth J."/>
            <person name="Bieri T.A."/>
            <person name="Nelson J.O."/>
            <person name="Berkowicz N."/>
            <person name="Wohldmann P.E."/>
            <person name="Cook L.L."/>
            <person name="Hickenbotham M.T."/>
            <person name="Eldred J."/>
            <person name="Williams D."/>
            <person name="Bedell J.A."/>
            <person name="Mardis E.R."/>
            <person name="Clifton S.W."/>
            <person name="Chissoe S.L."/>
            <person name="Marra M.A."/>
            <person name="Raymond C."/>
            <person name="Haugen E."/>
            <person name="Gillett W."/>
            <person name="Zhou Y."/>
            <person name="James R."/>
            <person name="Phelps K."/>
            <person name="Iadanoto S."/>
            <person name="Bubb K."/>
            <person name="Simms E."/>
            <person name="Levy R."/>
            <person name="Clendenning J."/>
            <person name="Kaul R."/>
            <person name="Kent W.J."/>
            <person name="Furey T.S."/>
            <person name="Baertsch R.A."/>
            <person name="Brent M.R."/>
            <person name="Keibler E."/>
            <person name="Flicek P."/>
            <person name="Bork P."/>
            <person name="Suyama M."/>
            <person name="Bailey J.A."/>
            <person name="Portnoy M.E."/>
            <person name="Torrents D."/>
            <person name="Chinwalla A.T."/>
            <person name="Gish W.R."/>
            <person name="Eddy S.R."/>
            <person name="McPherson J.D."/>
            <person name="Olson M.V."/>
            <person name="Eichler E.E."/>
            <person name="Green E.D."/>
            <person name="Waterston R.H."/>
            <person name="Wilson R.K."/>
        </authorList>
    </citation>
    <scope>NUCLEOTIDE SEQUENCE [LARGE SCALE GENOMIC DNA]</scope>
</reference>
<reference key="4">
    <citation type="submission" date="2005-07" db="EMBL/GenBank/DDBJ databases">
        <authorList>
            <person name="Mural R.J."/>
            <person name="Istrail S."/>
            <person name="Sutton G.G."/>
            <person name="Florea L."/>
            <person name="Halpern A.L."/>
            <person name="Mobarry C.M."/>
            <person name="Lippert R."/>
            <person name="Walenz B."/>
            <person name="Shatkay H."/>
            <person name="Dew I."/>
            <person name="Miller J.R."/>
            <person name="Flanigan M.J."/>
            <person name="Edwards N.J."/>
            <person name="Bolanos R."/>
            <person name="Fasulo D."/>
            <person name="Halldorsson B.V."/>
            <person name="Hannenhalli S."/>
            <person name="Turner R."/>
            <person name="Yooseph S."/>
            <person name="Lu F."/>
            <person name="Nusskern D.R."/>
            <person name="Shue B.C."/>
            <person name="Zheng X.H."/>
            <person name="Zhong F."/>
            <person name="Delcher A.L."/>
            <person name="Huson D.H."/>
            <person name="Kravitz S.A."/>
            <person name="Mouchard L."/>
            <person name="Reinert K."/>
            <person name="Remington K.A."/>
            <person name="Clark A.G."/>
            <person name="Waterman M.S."/>
            <person name="Eichler E.E."/>
            <person name="Adams M.D."/>
            <person name="Hunkapiller M.W."/>
            <person name="Myers E.W."/>
            <person name="Venter J.C."/>
        </authorList>
    </citation>
    <scope>NUCLEOTIDE SEQUENCE [LARGE SCALE GENOMIC DNA]</scope>
</reference>
<reference key="5">
    <citation type="journal article" date="2012" name="Proc. Natl. Acad. Sci. U.S.A.">
        <title>N-terminal acetylome analyses and functional insights of the N-terminal acetyltransferase NatB.</title>
        <authorList>
            <person name="Van Damme P."/>
            <person name="Lasa M."/>
            <person name="Polevoda B."/>
            <person name="Gazquez C."/>
            <person name="Elosegui-Artola A."/>
            <person name="Kim D.S."/>
            <person name="De Juan-Pardo E."/>
            <person name="Demeyer K."/>
            <person name="Hole K."/>
            <person name="Larrea E."/>
            <person name="Timmerman E."/>
            <person name="Prieto J."/>
            <person name="Arnesen T."/>
            <person name="Sherman F."/>
            <person name="Gevaert K."/>
            <person name="Aldabe R."/>
        </authorList>
    </citation>
    <scope>ACETYLATION [LARGE SCALE ANALYSIS] AT ALA-2</scope>
    <scope>CLEAVAGE OF INITIATOR METHIONINE [LARGE SCALE ANALYSIS]</scope>
    <scope>IDENTIFICATION BY MASS SPECTROMETRY [LARGE SCALE ANALYSIS]</scope>
</reference>
<reference key="6">
    <citation type="journal article" date="2006" name="Science">
        <title>The consensus coding sequences of human breast and colorectal cancers.</title>
        <authorList>
            <person name="Sjoeblom T."/>
            <person name="Jones S."/>
            <person name="Wood L.D."/>
            <person name="Parsons D.W."/>
            <person name="Lin J."/>
            <person name="Barber T.D."/>
            <person name="Mandelker D."/>
            <person name="Leary R.J."/>
            <person name="Ptak J."/>
            <person name="Silliman N."/>
            <person name="Szabo S."/>
            <person name="Buckhaults P."/>
            <person name="Farrell C."/>
            <person name="Meeh P."/>
            <person name="Markowitz S.D."/>
            <person name="Willis J."/>
            <person name="Dawson D."/>
            <person name="Willson J.K.V."/>
            <person name="Gazdar A.F."/>
            <person name="Hartigan J."/>
            <person name="Wu L."/>
            <person name="Liu C."/>
            <person name="Parmigiani G."/>
            <person name="Park B.H."/>
            <person name="Bachman K.E."/>
            <person name="Papadopoulos N."/>
            <person name="Vogelstein B."/>
            <person name="Kinzler K.W."/>
            <person name="Velculescu V.E."/>
        </authorList>
    </citation>
    <scope>VARIANTS [LARGE SCALE ANALYSIS] LEU-332 AND PHE-445</scope>
</reference>
<reference key="7">
    <citation type="journal article" date="2019" name="J. Biol. Chem.">
        <title>The 40S ribosomal protein uS5 (RPS2) assembles into an extraribosomal complex with human ZNF277 that competes with the PRMT3-uS5 interaction.</title>
        <authorList>
            <person name="Dionne K.L."/>
            <person name="Bergeron D."/>
            <person name="Landry-Voyer A.M."/>
            <person name="Bachand F."/>
        </authorList>
    </citation>
    <scope>INTERACTION WITH RPS2</scope>
    <scope>MUTAGENESIS OF 175-CYS--HIS-197; 226-CYS--HIS-248; 304-CYS--HIS-325 AND 359-CYS--HIS-381</scope>
</reference>
<protein>
    <recommendedName>
        <fullName>Zinc finger protein 277</fullName>
    </recommendedName>
    <alternativeName>
        <fullName>Nuclear receptor-interacting factor 4</fullName>
    </alternativeName>
</protein>
<dbReference type="EMBL" id="AF209198">
    <property type="protein sequence ID" value="AAF85941.1"/>
    <property type="status" value="ALT_INIT"/>
    <property type="molecule type" value="mRNA"/>
</dbReference>
<dbReference type="EMBL" id="AF308819">
    <property type="protein sequence ID" value="AAL55819.1"/>
    <property type="molecule type" value="mRNA"/>
</dbReference>
<dbReference type="EMBL" id="AC004112">
    <property type="protein sequence ID" value="AAS07407.1"/>
    <property type="molecule type" value="Genomic_DNA"/>
</dbReference>
<dbReference type="EMBL" id="AC004111">
    <property type="protein sequence ID" value="AAS07413.1"/>
    <property type="status" value="ALT_INIT"/>
    <property type="molecule type" value="Genomic_DNA"/>
</dbReference>
<dbReference type="EMBL" id="CH471070">
    <property type="protein sequence ID" value="EAW83461.1"/>
    <property type="molecule type" value="Genomic_DNA"/>
</dbReference>
<dbReference type="CCDS" id="CCDS5755.2"/>
<dbReference type="RefSeq" id="NP_068834.2">
    <property type="nucleotide sequence ID" value="NM_021994.3"/>
</dbReference>
<dbReference type="SMR" id="Q9NRM2"/>
<dbReference type="BioGRID" id="116349">
    <property type="interactions" value="33"/>
</dbReference>
<dbReference type="FunCoup" id="Q9NRM2">
    <property type="interactions" value="1628"/>
</dbReference>
<dbReference type="IntAct" id="Q9NRM2">
    <property type="interactions" value="24"/>
</dbReference>
<dbReference type="STRING" id="9606.ENSP00000354501"/>
<dbReference type="GlyGen" id="Q9NRM2">
    <property type="glycosylation" value="1 site, 1 O-linked glycan (1 site)"/>
</dbReference>
<dbReference type="iPTMnet" id="Q9NRM2"/>
<dbReference type="PhosphoSitePlus" id="Q9NRM2"/>
<dbReference type="BioMuta" id="ZNF277"/>
<dbReference type="DMDM" id="251757417"/>
<dbReference type="jPOST" id="Q9NRM2"/>
<dbReference type="MassIVE" id="Q9NRM2"/>
<dbReference type="PaxDb" id="9606-ENSP00000354501"/>
<dbReference type="PeptideAtlas" id="Q9NRM2"/>
<dbReference type="ProteomicsDB" id="82389"/>
<dbReference type="Pumba" id="Q9NRM2"/>
<dbReference type="Antibodypedia" id="17357">
    <property type="antibodies" value="100 antibodies from 23 providers"/>
</dbReference>
<dbReference type="DNASU" id="11179"/>
<dbReference type="Ensembl" id="ENST00000361822.8">
    <property type="protein sequence ID" value="ENSP00000354501.3"/>
    <property type="gene ID" value="ENSG00000198839.10"/>
</dbReference>
<dbReference type="GeneID" id="11179"/>
<dbReference type="KEGG" id="hsa:11179"/>
<dbReference type="MANE-Select" id="ENST00000361822.8">
    <property type="protein sequence ID" value="ENSP00000354501.3"/>
    <property type="RefSeq nucleotide sequence ID" value="NM_021994.3"/>
    <property type="RefSeq protein sequence ID" value="NP_068834.2"/>
</dbReference>
<dbReference type="UCSC" id="uc003vge.3">
    <property type="organism name" value="human"/>
</dbReference>
<dbReference type="AGR" id="HGNC:13070"/>
<dbReference type="CTD" id="11179"/>
<dbReference type="DisGeNET" id="11179"/>
<dbReference type="GeneCards" id="ZNF277"/>
<dbReference type="HGNC" id="HGNC:13070">
    <property type="gene designation" value="ZNF277"/>
</dbReference>
<dbReference type="HPA" id="ENSG00000198839">
    <property type="expression patterns" value="Low tissue specificity"/>
</dbReference>
<dbReference type="MalaCards" id="ZNF277"/>
<dbReference type="MIM" id="605465">
    <property type="type" value="gene"/>
</dbReference>
<dbReference type="neXtProt" id="NX_Q9NRM2"/>
<dbReference type="OpenTargets" id="ENSG00000198839"/>
<dbReference type="PharmGKB" id="PA37646"/>
<dbReference type="VEuPathDB" id="HostDB:ENSG00000198839"/>
<dbReference type="eggNOG" id="KOG2482">
    <property type="taxonomic scope" value="Eukaryota"/>
</dbReference>
<dbReference type="GeneTree" id="ENSGT00390000010852"/>
<dbReference type="HOGENOM" id="CLU_033436_0_0_1"/>
<dbReference type="InParanoid" id="Q9NRM2"/>
<dbReference type="OMA" id="WDKPEFF"/>
<dbReference type="OrthoDB" id="278606at2759"/>
<dbReference type="PAN-GO" id="Q9NRM2">
    <property type="GO annotations" value="0 GO annotations based on evolutionary models"/>
</dbReference>
<dbReference type="PhylomeDB" id="Q9NRM2"/>
<dbReference type="TreeFam" id="TF318036"/>
<dbReference type="PathwayCommons" id="Q9NRM2"/>
<dbReference type="SignaLink" id="Q9NRM2"/>
<dbReference type="BioGRID-ORCS" id="11179">
    <property type="hits" value="12 hits in 1165 CRISPR screens"/>
</dbReference>
<dbReference type="CD-CODE" id="6F24707C">
    <property type="entry name" value="Cajal body"/>
</dbReference>
<dbReference type="ChiTaRS" id="ZNF277">
    <property type="organism name" value="human"/>
</dbReference>
<dbReference type="GeneWiki" id="ZNF277P"/>
<dbReference type="GenomeRNAi" id="11179"/>
<dbReference type="Pharos" id="Q9NRM2">
    <property type="development level" value="Tbio"/>
</dbReference>
<dbReference type="PRO" id="PR:Q9NRM2"/>
<dbReference type="Proteomes" id="UP000005640">
    <property type="component" value="Chromosome 7"/>
</dbReference>
<dbReference type="RNAct" id="Q9NRM2">
    <property type="molecule type" value="protein"/>
</dbReference>
<dbReference type="Bgee" id="ENSG00000198839">
    <property type="expression patterns" value="Expressed in calcaneal tendon and 195 other cell types or tissues"/>
</dbReference>
<dbReference type="ExpressionAtlas" id="Q9NRM2">
    <property type="expression patterns" value="baseline and differential"/>
</dbReference>
<dbReference type="GO" id="GO:0005634">
    <property type="term" value="C:nucleus"/>
    <property type="evidence" value="ECO:0007669"/>
    <property type="project" value="UniProtKB-SubCell"/>
</dbReference>
<dbReference type="GO" id="GO:0000978">
    <property type="term" value="F:RNA polymerase II cis-regulatory region sequence-specific DNA binding"/>
    <property type="evidence" value="ECO:0007669"/>
    <property type="project" value="Ensembl"/>
</dbReference>
<dbReference type="GO" id="GO:0008270">
    <property type="term" value="F:zinc ion binding"/>
    <property type="evidence" value="ECO:0007669"/>
    <property type="project" value="UniProtKB-KW"/>
</dbReference>
<dbReference type="GO" id="GO:0070301">
    <property type="term" value="P:cellular response to hydrogen peroxide"/>
    <property type="evidence" value="ECO:0007669"/>
    <property type="project" value="Ensembl"/>
</dbReference>
<dbReference type="GO" id="GO:2000772">
    <property type="term" value="P:regulation of cellular senescence"/>
    <property type="evidence" value="ECO:0007669"/>
    <property type="project" value="Ensembl"/>
</dbReference>
<dbReference type="FunFam" id="3.30.160.60:FF:001548">
    <property type="entry name" value="Zinc finger protein 277, isoform CRA_a"/>
    <property type="match status" value="1"/>
</dbReference>
<dbReference type="Gene3D" id="3.30.160.60">
    <property type="entry name" value="Classic Zinc Finger"/>
    <property type="match status" value="2"/>
</dbReference>
<dbReference type="InterPro" id="IPR041661">
    <property type="entry name" value="ZN622/Rei1/Reh1_Znf-C2H2"/>
</dbReference>
<dbReference type="InterPro" id="IPR040048">
    <property type="entry name" value="ZNF277"/>
</dbReference>
<dbReference type="InterPro" id="IPR036236">
    <property type="entry name" value="Znf_C2H2_sf"/>
</dbReference>
<dbReference type="InterPro" id="IPR013087">
    <property type="entry name" value="Znf_C2H2_type"/>
</dbReference>
<dbReference type="PANTHER" id="PTHR13267">
    <property type="entry name" value="ZINC FINGER PROTEIN 277"/>
    <property type="match status" value="1"/>
</dbReference>
<dbReference type="PANTHER" id="PTHR13267:SF3">
    <property type="entry name" value="ZINC FINGER PROTEIN 277"/>
    <property type="match status" value="1"/>
</dbReference>
<dbReference type="Pfam" id="PF12756">
    <property type="entry name" value="zf-C2H2_2"/>
    <property type="match status" value="3"/>
</dbReference>
<dbReference type="SMART" id="SM00355">
    <property type="entry name" value="ZnF_C2H2"/>
    <property type="match status" value="5"/>
</dbReference>
<dbReference type="SUPFAM" id="SSF57667">
    <property type="entry name" value="beta-beta-alpha zinc fingers"/>
    <property type="match status" value="2"/>
</dbReference>
<dbReference type="PROSITE" id="PS00028">
    <property type="entry name" value="ZINC_FINGER_C2H2_1"/>
    <property type="match status" value="2"/>
</dbReference>
<dbReference type="PROSITE" id="PS50157">
    <property type="entry name" value="ZINC_FINGER_C2H2_2"/>
    <property type="match status" value="2"/>
</dbReference>
<comment type="function">
    <text evidence="1">Probable transcription factor. Involved in modulation of cellular senescence; represses transcription of the tumor suppressor gene INK4A/ARF, perhaps acting via the Polycomb group (PcG) complex PRC1.</text>
</comment>
<comment type="subunit">
    <text evidence="1 4">Interacts (via zinc-finger domains) with RPS2/40S ribosomal protein S2, perhaps as nascent RPS2 is synthesized during translation; the interaction is direct; the interaction is extra-ribosomal (PubMed:30530495). Interaction with RPS2 competes with the binding of RPS2 to protein arginine methyltransferase PRMT3 (PubMed:30530495). Interacts with Polycomb group (PcG) complex protein BMI1 (By similarity). May be part of a complex including at least ZNF277, BMI1 and RNF2/RING2 (By similarity).</text>
</comment>
<comment type="subcellular location">
    <subcellularLocation>
        <location evidence="5">Nucleus</location>
    </subcellularLocation>
</comment>
<comment type="induction">
    <text evidence="1">Down-regulated by oxidative stress.</text>
</comment>
<comment type="similarity">
    <text evidence="5">Belongs to the ZNF277 family.</text>
</comment>
<comment type="sequence caution" evidence="5">
    <conflict type="erroneous initiation">
        <sequence resource="EMBL-CDS" id="AAF85941"/>
    </conflict>
</comment>
<comment type="sequence caution" evidence="5">
    <conflict type="erroneous initiation">
        <sequence resource="EMBL-CDS" id="AAS07413"/>
    </conflict>
</comment>
<sequence length="450" mass="52788">MAASKTQGAVARMQEDRDGSCSTVGGVGYGDSKDCILEPLSLPESPGGTTTLEGSPSVPCIFCEEHFPVAEQDKLLKHMIIEHKIVIADVKLVADFQRYILYWRKRFTEQPITDFCSVIRINSTAPFEEQENYFLLCDVLPEDRILREELQKQRLREILEQQQQERNDTNFHGVCMFCNEEFLGNRSVILNHMAREHAFNIGLPDNIVNCNEFLCTLQKKLDNLQCLYCEKTFRDKNTLKDHMRKKQHRKINPKNREYDRFYVINYLELGKSWEEVQLEDDRELLDHQEDDWSDWEEHPASAVCLFCEKQAETIEKLYVHMEDAHEFDLLKIKSELGLNFYQQVKLVNFIRRQVHQCRCYGCHVKFKSKADLRTHMEETKHTSLLPDRKTWDQLEYYFPTYENDTLLCTLSDSESDLTAQEQNENVPIISEDTSKLYALKQSSILNQLLL</sequence>
<evidence type="ECO:0000250" key="1">
    <source>
        <dbReference type="UniProtKB" id="E9Q6D6"/>
    </source>
</evidence>
<evidence type="ECO:0000255" key="2">
    <source>
        <dbReference type="PROSITE-ProRule" id="PRU00042"/>
    </source>
</evidence>
<evidence type="ECO:0000269" key="3">
    <source>
    </source>
</evidence>
<evidence type="ECO:0000269" key="4">
    <source>
    </source>
</evidence>
<evidence type="ECO:0000305" key="5"/>
<evidence type="ECO:0007744" key="6">
    <source>
    </source>
</evidence>
<proteinExistence type="evidence at protein level"/>
<feature type="initiator methionine" description="Removed" evidence="6">
    <location>
        <position position="1"/>
    </location>
</feature>
<feature type="chain" id="PRO_0000047503" description="Zinc finger protein 277">
    <location>
        <begin position="2"/>
        <end position="450"/>
    </location>
</feature>
<feature type="zinc finger region" description="C2H2-type 1" evidence="2">
    <location>
        <begin position="224"/>
        <end position="248"/>
    </location>
</feature>
<feature type="zinc finger region" description="C2H2-type 2" evidence="2">
    <location>
        <begin position="355"/>
        <end position="381"/>
    </location>
</feature>
<feature type="modified residue" description="N-acetylalanine" evidence="6">
    <location>
        <position position="2"/>
    </location>
</feature>
<feature type="sequence variant" id="VAR_059908" description="In dbSNP:rs34571830.">
    <original>V</original>
    <variation>I</variation>
    <location>
        <position position="174"/>
    </location>
</feature>
<feature type="sequence variant" id="VAR_035574" description="In a breast cancer sample; somatic mutation." evidence="3">
    <original>I</original>
    <variation>L</variation>
    <location>
        <position position="332"/>
    </location>
</feature>
<feature type="sequence variant" id="VAR_057415" description="In dbSNP:rs11539696.">
    <original>V</original>
    <variation>M</variation>
    <location>
        <position position="364"/>
    </location>
</feature>
<feature type="sequence variant" id="VAR_035575" description="In a breast cancer sample; somatic mutation." evidence="3">
    <original>L</original>
    <variation>F</variation>
    <location>
        <position position="445"/>
    </location>
</feature>
<feature type="mutagenesis site" description="Modest reduction in binding to RPS2." evidence="4">
    <original>CMFCNEEFLGNRSVILNHMAREH</original>
    <variation>SMFCNEEFLGNRSVILNHMAREA</variation>
    <location>
        <begin position="175"/>
        <end position="197"/>
    </location>
</feature>
<feature type="mutagenesis site" description="Modest reduction in binding to RPS2." evidence="4">
    <original>CLYCEKTFRDKNTLKDHMRKKQH</original>
    <variation>SLYCEKTFRDKNTLKDHMRKKQA</variation>
    <location>
        <begin position="226"/>
        <end position="248"/>
    </location>
</feature>
<feature type="mutagenesis site" description="Drastic reduction in binding to RPS2." evidence="4">
    <original>CLFCEKQAETIEKLYVHMEDAH</original>
    <variation>SLFCEKQAETIEKLYVHMEDAA</variation>
    <location>
        <begin position="304"/>
        <end position="325"/>
    </location>
</feature>
<feature type="mutagenesis site" description="Modest reduction in binding to RPS2." evidence="4">
    <original>CYGCHVKFKSKADLRTHMEETKH</original>
    <variation>SYGCHVKFKSKADLRTHMEETKA</variation>
    <location>
        <begin position="359"/>
        <end position="381"/>
    </location>
</feature>